<accession>A0L9Y5</accession>
<proteinExistence type="inferred from homology"/>
<organism>
    <name type="scientific">Magnetococcus marinus (strain ATCC BAA-1437 / JCM 17883 / MC-1)</name>
    <dbReference type="NCBI Taxonomy" id="156889"/>
    <lineage>
        <taxon>Bacteria</taxon>
        <taxon>Pseudomonadati</taxon>
        <taxon>Pseudomonadota</taxon>
        <taxon>Alphaproteobacteria</taxon>
        <taxon>Magnetococcales</taxon>
        <taxon>Magnetococcaceae</taxon>
        <taxon>Magnetococcus</taxon>
    </lineage>
</organism>
<gene>
    <name evidence="1" type="primary">nhaA2</name>
    <name type="ordered locus">Mmc1_2277</name>
</gene>
<reference key="1">
    <citation type="journal article" date="2009" name="Appl. Environ. Microbiol.">
        <title>Complete genome sequence of the chemolithoautotrophic marine magnetotactic coccus strain MC-1.</title>
        <authorList>
            <person name="Schubbe S."/>
            <person name="Williams T.J."/>
            <person name="Xie G."/>
            <person name="Kiss H.E."/>
            <person name="Brettin T.S."/>
            <person name="Martinez D."/>
            <person name="Ross C.A."/>
            <person name="Schuler D."/>
            <person name="Cox B.L."/>
            <person name="Nealson K.H."/>
            <person name="Bazylinski D.A."/>
        </authorList>
    </citation>
    <scope>NUCLEOTIDE SEQUENCE [LARGE SCALE GENOMIC DNA]</scope>
    <source>
        <strain>ATCC BAA-1437 / JCM 17883 / MC-1</strain>
    </source>
</reference>
<feature type="chain" id="PRO_0000334333" description="Na(+)/H(+) antiporter NhaA 2">
    <location>
        <begin position="1"/>
        <end position="397"/>
    </location>
</feature>
<feature type="transmembrane region" description="Helical" evidence="1">
    <location>
        <begin position="9"/>
        <end position="29"/>
    </location>
</feature>
<feature type="transmembrane region" description="Helical" evidence="1">
    <location>
        <begin position="59"/>
        <end position="79"/>
    </location>
</feature>
<feature type="transmembrane region" description="Helical" evidence="1">
    <location>
        <begin position="95"/>
        <end position="115"/>
    </location>
</feature>
<feature type="transmembrane region" description="Helical" evidence="1">
    <location>
        <begin position="125"/>
        <end position="145"/>
    </location>
</feature>
<feature type="transmembrane region" description="Helical" evidence="1">
    <location>
        <begin position="154"/>
        <end position="174"/>
    </location>
</feature>
<feature type="transmembrane region" description="Helical" evidence="1">
    <location>
        <begin position="177"/>
        <end position="197"/>
    </location>
</feature>
<feature type="transmembrane region" description="Helical" evidence="1">
    <location>
        <begin position="222"/>
        <end position="242"/>
    </location>
</feature>
<feature type="transmembrane region" description="Helical" evidence="1">
    <location>
        <begin position="260"/>
        <end position="280"/>
    </location>
</feature>
<feature type="transmembrane region" description="Helical" evidence="1">
    <location>
        <begin position="292"/>
        <end position="312"/>
    </location>
</feature>
<feature type="transmembrane region" description="Helical" evidence="1">
    <location>
        <begin position="332"/>
        <end position="352"/>
    </location>
</feature>
<feature type="transmembrane region" description="Helical" evidence="1">
    <location>
        <begin position="371"/>
        <end position="391"/>
    </location>
</feature>
<protein>
    <recommendedName>
        <fullName evidence="1">Na(+)/H(+) antiporter NhaA 2</fullName>
    </recommendedName>
    <alternativeName>
        <fullName evidence="1">Sodium/proton antiporter NhaA 2</fullName>
    </alternativeName>
</protein>
<name>NHAA2_MAGMM</name>
<keyword id="KW-0050">Antiport</keyword>
<keyword id="KW-0997">Cell inner membrane</keyword>
<keyword id="KW-1003">Cell membrane</keyword>
<keyword id="KW-0406">Ion transport</keyword>
<keyword id="KW-0472">Membrane</keyword>
<keyword id="KW-1185">Reference proteome</keyword>
<keyword id="KW-0915">Sodium</keyword>
<keyword id="KW-0739">Sodium transport</keyword>
<keyword id="KW-0812">Transmembrane</keyword>
<keyword id="KW-1133">Transmembrane helix</keyword>
<keyword id="KW-0813">Transport</keyword>
<dbReference type="EMBL" id="CP000471">
    <property type="protein sequence ID" value="ABK44778.1"/>
    <property type="molecule type" value="Genomic_DNA"/>
</dbReference>
<dbReference type="RefSeq" id="WP_011713899.1">
    <property type="nucleotide sequence ID" value="NC_008576.1"/>
</dbReference>
<dbReference type="SMR" id="A0L9Y5"/>
<dbReference type="STRING" id="156889.Mmc1_2277"/>
<dbReference type="KEGG" id="mgm:Mmc1_2277"/>
<dbReference type="eggNOG" id="COG3004">
    <property type="taxonomic scope" value="Bacteria"/>
</dbReference>
<dbReference type="HOGENOM" id="CLU_015803_1_0_5"/>
<dbReference type="OrthoDB" id="9808135at2"/>
<dbReference type="Proteomes" id="UP000002586">
    <property type="component" value="Chromosome"/>
</dbReference>
<dbReference type="GO" id="GO:0005886">
    <property type="term" value="C:plasma membrane"/>
    <property type="evidence" value="ECO:0007669"/>
    <property type="project" value="UniProtKB-SubCell"/>
</dbReference>
<dbReference type="GO" id="GO:0015385">
    <property type="term" value="F:sodium:proton antiporter activity"/>
    <property type="evidence" value="ECO:0007669"/>
    <property type="project" value="TreeGrafter"/>
</dbReference>
<dbReference type="GO" id="GO:0006885">
    <property type="term" value="P:regulation of pH"/>
    <property type="evidence" value="ECO:0007669"/>
    <property type="project" value="InterPro"/>
</dbReference>
<dbReference type="Gene3D" id="1.20.1530.10">
    <property type="entry name" value="Na+/H+ antiporter like domain"/>
    <property type="match status" value="1"/>
</dbReference>
<dbReference type="HAMAP" id="MF_01844">
    <property type="entry name" value="NhaA"/>
    <property type="match status" value="1"/>
</dbReference>
<dbReference type="InterPro" id="IPR023171">
    <property type="entry name" value="Na/H_antiporter_dom_sf"/>
</dbReference>
<dbReference type="InterPro" id="IPR004670">
    <property type="entry name" value="NhaA"/>
</dbReference>
<dbReference type="NCBIfam" id="TIGR00773">
    <property type="entry name" value="NhaA"/>
    <property type="match status" value="1"/>
</dbReference>
<dbReference type="NCBIfam" id="NF007111">
    <property type="entry name" value="PRK09560.1"/>
    <property type="match status" value="1"/>
</dbReference>
<dbReference type="NCBIfam" id="NF007112">
    <property type="entry name" value="PRK09561.1"/>
    <property type="match status" value="1"/>
</dbReference>
<dbReference type="PANTHER" id="PTHR30341:SF0">
    <property type="entry name" value="NA(+)_H(+) ANTIPORTER NHAA"/>
    <property type="match status" value="1"/>
</dbReference>
<dbReference type="PANTHER" id="PTHR30341">
    <property type="entry name" value="SODIUM ION/PROTON ANTIPORTER NHAA-RELATED"/>
    <property type="match status" value="1"/>
</dbReference>
<dbReference type="Pfam" id="PF06965">
    <property type="entry name" value="Na_H_antiport_1"/>
    <property type="match status" value="1"/>
</dbReference>
<comment type="function">
    <text evidence="1">Na(+)/H(+) antiporter that extrudes sodium in exchange for external protons.</text>
</comment>
<comment type="catalytic activity">
    <reaction evidence="1">
        <text>Na(+)(in) + 2 H(+)(out) = Na(+)(out) + 2 H(+)(in)</text>
        <dbReference type="Rhea" id="RHEA:29251"/>
        <dbReference type="ChEBI" id="CHEBI:15378"/>
        <dbReference type="ChEBI" id="CHEBI:29101"/>
    </reaction>
    <physiologicalReaction direction="left-to-right" evidence="1">
        <dbReference type="Rhea" id="RHEA:29252"/>
    </physiologicalReaction>
</comment>
<comment type="subcellular location">
    <subcellularLocation>
        <location evidence="1">Cell inner membrane</location>
        <topology evidence="1">Multi-pass membrane protein</topology>
    </subcellularLocation>
</comment>
<comment type="similarity">
    <text evidence="1">Belongs to the NhaA Na(+)/H(+) (TC 2.A.33) antiporter family.</text>
</comment>
<evidence type="ECO:0000255" key="1">
    <source>
        <dbReference type="HAMAP-Rule" id="MF_01844"/>
    </source>
</evidence>
<sequence>MNAKIRKMLHNPAASGILIFLAAVAAMAVENSAWNTHYNAFLDIPVSVQFADLTIAKPLLLWINDGLMAVFFLLVGLELKREFLEGELSQPSNVILPVVGAVGGIALPAAIYTLINQGNPAALDGWAIPTATDIAFALGILALLGKRVPASLKLFLLTLAIIDDLAAILIIAFFYTSELSPASLMIAGSAIGTLILMNRLGVTGISGYMVVGIVLWIAVLKSGVHATLAGVVLGFVIPLKGEEPGELSPLHQLEDDLHHVVGLGILPLFAFANAGVSLQGLTPSILLDPVPLGIALGLFLGKQIGVFGFVWLSIKSGLAKLPEGFTWKQLYGVALLCGVGFTMSLFISSLAFEHGSSALVSGAPDMGSARLGILTGSILSGIFGYILLRFSLPKPPQ</sequence>